<proteinExistence type="inferred from homology"/>
<reference key="1">
    <citation type="journal article" date="2011" name="J. Bacteriol.">
        <title>Comparative genomics of 28 Salmonella enterica isolates: evidence for CRISPR-mediated adaptive sublineage evolution.</title>
        <authorList>
            <person name="Fricke W.F."/>
            <person name="Mammel M.K."/>
            <person name="McDermott P.F."/>
            <person name="Tartera C."/>
            <person name="White D.G."/>
            <person name="Leclerc J.E."/>
            <person name="Ravel J."/>
            <person name="Cebula T.A."/>
        </authorList>
    </citation>
    <scope>NUCLEOTIDE SEQUENCE [LARGE SCALE GENOMIC DNA]</scope>
    <source>
        <strain>CT_02021853</strain>
    </source>
</reference>
<evidence type="ECO:0000255" key="1">
    <source>
        <dbReference type="HAMAP-Rule" id="MF_01535"/>
    </source>
</evidence>
<comment type="function">
    <text evidence="1">Involved in the catabolism of L-rhamnose (6-deoxy-L-mannose). Catalyzes the transfer of the gamma-phosphate group from ATP to the 1-hydroxyl group of L-rhamnulose to yield L-rhamnulose 1-phosphate.</text>
</comment>
<comment type="catalytic activity">
    <reaction evidence="1">
        <text>L-rhamnulose + ATP = L-rhamnulose 1-phosphate + ADP + H(+)</text>
        <dbReference type="Rhea" id="RHEA:20117"/>
        <dbReference type="ChEBI" id="CHEBI:15378"/>
        <dbReference type="ChEBI" id="CHEBI:17897"/>
        <dbReference type="ChEBI" id="CHEBI:30616"/>
        <dbReference type="ChEBI" id="CHEBI:58313"/>
        <dbReference type="ChEBI" id="CHEBI:456216"/>
        <dbReference type="EC" id="2.7.1.5"/>
    </reaction>
</comment>
<comment type="cofactor">
    <cofactor evidence="1">
        <name>Mg(2+)</name>
        <dbReference type="ChEBI" id="CHEBI:18420"/>
    </cofactor>
</comment>
<comment type="pathway">
    <text evidence="1">Carbohydrate degradation; L-rhamnose degradation; glycerone phosphate from L-rhamnose: step 2/3.</text>
</comment>
<comment type="similarity">
    <text evidence="1">Belongs to the rhamnulokinase family.</text>
</comment>
<sequence length="489" mass="54555">MTFRHCVAVDLGASSGRVMLARYDSKHRTLTLREIHRFVNCLQKTDGFDTWDIDSLEKDIRLGLKKVCNEGILIDSISIDTWGVDYVLLDKQGQRVGLPVSYRDNRTTGIMPQALVQIGKSEIYRRSGIQFLPFNTIYQLHALTKQQPELTAQVAHALLMPDYFSYRLTGEMNWEYTNATTTQLVNINTDDWDDTLLAWTGAKKSWFGRPSHPGNVIGDWICPQGNRIPVVAVASHDTASAVIASPLANKHSAYLSSGTWSLMGFESKKPYTTDEALAANITNEGGAEGRYRVLKNIMGLWLLQRVLKERRITDLPALIAQTEALPACRFLINPNDDRFINPDDMRAEIQAACRETDQPVPVSDAELARCIFDSLALLYADILHELANLRGEKFTQLHIVGGGCQNALLNQLCADACGIRVMAGPVEASTLGNIGIQLMTLDELNNVDDFRQVVSANYDLTTYIPNPDSEIARHVAQFQPKRQTKELCA</sequence>
<feature type="chain" id="PRO_1000146549" description="Rhamnulokinase">
    <location>
        <begin position="1"/>
        <end position="489"/>
    </location>
</feature>
<feature type="active site" description="Proton acceptor" evidence="1">
    <location>
        <position position="237"/>
    </location>
</feature>
<feature type="binding site" evidence="1">
    <location>
        <begin position="13"/>
        <end position="17"/>
    </location>
    <ligand>
        <name>ATP</name>
        <dbReference type="ChEBI" id="CHEBI:30616"/>
    </ligand>
</feature>
<feature type="binding site" evidence="1">
    <location>
        <position position="83"/>
    </location>
    <ligand>
        <name>substrate</name>
    </ligand>
</feature>
<feature type="binding site" evidence="1">
    <location>
        <begin position="236"/>
        <end position="238"/>
    </location>
    <ligand>
        <name>substrate</name>
    </ligand>
</feature>
<feature type="binding site" evidence="1">
    <location>
        <position position="259"/>
    </location>
    <ligand>
        <name>ATP</name>
        <dbReference type="ChEBI" id="CHEBI:30616"/>
    </ligand>
</feature>
<feature type="binding site" evidence="1">
    <location>
        <position position="296"/>
    </location>
    <ligand>
        <name>substrate</name>
    </ligand>
</feature>
<feature type="binding site" evidence="1">
    <location>
        <position position="304"/>
    </location>
    <ligand>
        <name>ATP</name>
        <dbReference type="ChEBI" id="CHEBI:30616"/>
    </ligand>
</feature>
<feature type="binding site" evidence="1">
    <location>
        <position position="402"/>
    </location>
    <ligand>
        <name>ATP</name>
        <dbReference type="ChEBI" id="CHEBI:30616"/>
    </ligand>
</feature>
<feature type="disulfide bond" evidence="1">
    <location>
        <begin position="68"/>
        <end position="222"/>
    </location>
</feature>
<feature type="disulfide bond" evidence="1">
    <location>
        <begin position="353"/>
        <end position="370"/>
    </location>
</feature>
<feature type="disulfide bond" evidence="1">
    <location>
        <begin position="413"/>
        <end position="417"/>
    </location>
</feature>
<dbReference type="EC" id="2.7.1.5" evidence="1"/>
<dbReference type="EMBL" id="CP001144">
    <property type="protein sequence ID" value="ACH77072.1"/>
    <property type="molecule type" value="Genomic_DNA"/>
</dbReference>
<dbReference type="RefSeq" id="WP_000143977.1">
    <property type="nucleotide sequence ID" value="NC_011205.1"/>
</dbReference>
<dbReference type="SMR" id="B5FPP4"/>
<dbReference type="KEGG" id="sed:SeD_A4442"/>
<dbReference type="HOGENOM" id="CLU_039395_0_0_6"/>
<dbReference type="UniPathway" id="UPA00541">
    <property type="reaction ID" value="UER00602"/>
</dbReference>
<dbReference type="Proteomes" id="UP000008322">
    <property type="component" value="Chromosome"/>
</dbReference>
<dbReference type="GO" id="GO:0005829">
    <property type="term" value="C:cytosol"/>
    <property type="evidence" value="ECO:0007669"/>
    <property type="project" value="TreeGrafter"/>
</dbReference>
<dbReference type="GO" id="GO:0005524">
    <property type="term" value="F:ATP binding"/>
    <property type="evidence" value="ECO:0007669"/>
    <property type="project" value="UniProtKB-KW"/>
</dbReference>
<dbReference type="GO" id="GO:0004370">
    <property type="term" value="F:glycerol kinase activity"/>
    <property type="evidence" value="ECO:0007669"/>
    <property type="project" value="TreeGrafter"/>
</dbReference>
<dbReference type="GO" id="GO:0008993">
    <property type="term" value="F:rhamnulokinase activity"/>
    <property type="evidence" value="ECO:0007669"/>
    <property type="project" value="UniProtKB-UniRule"/>
</dbReference>
<dbReference type="GO" id="GO:0006071">
    <property type="term" value="P:glycerol metabolic process"/>
    <property type="evidence" value="ECO:0007669"/>
    <property type="project" value="TreeGrafter"/>
</dbReference>
<dbReference type="GO" id="GO:0019301">
    <property type="term" value="P:rhamnose catabolic process"/>
    <property type="evidence" value="ECO:0007669"/>
    <property type="project" value="UniProtKB-UniRule"/>
</dbReference>
<dbReference type="CDD" id="cd07771">
    <property type="entry name" value="ASKHA_NBD_FGGY_RhaB-like"/>
    <property type="match status" value="1"/>
</dbReference>
<dbReference type="FunFam" id="3.30.420.40:FF:000064">
    <property type="entry name" value="Rhamnulokinase"/>
    <property type="match status" value="1"/>
</dbReference>
<dbReference type="FunFam" id="3.30.420.40:FF:000073">
    <property type="entry name" value="Rhamnulokinase"/>
    <property type="match status" value="1"/>
</dbReference>
<dbReference type="Gene3D" id="3.30.420.40">
    <property type="match status" value="2"/>
</dbReference>
<dbReference type="HAMAP" id="MF_01535">
    <property type="entry name" value="Rhamnulokinase"/>
    <property type="match status" value="1"/>
</dbReference>
<dbReference type="InterPro" id="IPR043129">
    <property type="entry name" value="ATPase_NBD"/>
</dbReference>
<dbReference type="InterPro" id="IPR018485">
    <property type="entry name" value="FGGY_C"/>
</dbReference>
<dbReference type="InterPro" id="IPR018484">
    <property type="entry name" value="FGGY_N"/>
</dbReference>
<dbReference type="InterPro" id="IPR013449">
    <property type="entry name" value="Rhamnulokinase"/>
</dbReference>
<dbReference type="NCBIfam" id="NF007925">
    <property type="entry name" value="PRK10640.1"/>
    <property type="match status" value="1"/>
</dbReference>
<dbReference type="NCBIfam" id="TIGR02627">
    <property type="entry name" value="rhamnulo_kin"/>
    <property type="match status" value="1"/>
</dbReference>
<dbReference type="PANTHER" id="PTHR10196:SF93">
    <property type="entry name" value="L-RHAMNULOKINASE"/>
    <property type="match status" value="1"/>
</dbReference>
<dbReference type="PANTHER" id="PTHR10196">
    <property type="entry name" value="SUGAR KINASE"/>
    <property type="match status" value="1"/>
</dbReference>
<dbReference type="Pfam" id="PF02782">
    <property type="entry name" value="FGGY_C"/>
    <property type="match status" value="1"/>
</dbReference>
<dbReference type="Pfam" id="PF00370">
    <property type="entry name" value="FGGY_N"/>
    <property type="match status" value="1"/>
</dbReference>
<dbReference type="SUPFAM" id="SSF53067">
    <property type="entry name" value="Actin-like ATPase domain"/>
    <property type="match status" value="2"/>
</dbReference>
<accession>B5FPP4</accession>
<gene>
    <name evidence="1" type="primary">rhaB</name>
    <name type="ordered locus">SeD_A4442</name>
</gene>
<protein>
    <recommendedName>
        <fullName evidence="1">Rhamnulokinase</fullName>
        <shortName evidence="1">RhaB</shortName>
        <ecNumber evidence="1">2.7.1.5</ecNumber>
    </recommendedName>
    <alternativeName>
        <fullName evidence="1">ATP:L-rhamnulose phosphotransferase</fullName>
    </alternativeName>
    <alternativeName>
        <fullName evidence="1">L-rhamnulose 1-kinase</fullName>
    </alternativeName>
    <alternativeName>
        <fullName evidence="1">Rhamnulose kinase</fullName>
    </alternativeName>
</protein>
<organism>
    <name type="scientific">Salmonella dublin (strain CT_02021853)</name>
    <dbReference type="NCBI Taxonomy" id="439851"/>
    <lineage>
        <taxon>Bacteria</taxon>
        <taxon>Pseudomonadati</taxon>
        <taxon>Pseudomonadota</taxon>
        <taxon>Gammaproteobacteria</taxon>
        <taxon>Enterobacterales</taxon>
        <taxon>Enterobacteriaceae</taxon>
        <taxon>Salmonella</taxon>
    </lineage>
</organism>
<keyword id="KW-0067">ATP-binding</keyword>
<keyword id="KW-1015">Disulfide bond</keyword>
<keyword id="KW-0418">Kinase</keyword>
<keyword id="KW-0460">Magnesium</keyword>
<keyword id="KW-0547">Nucleotide-binding</keyword>
<keyword id="KW-0684">Rhamnose metabolism</keyword>
<keyword id="KW-0808">Transferase</keyword>
<name>RHAB_SALDC</name>